<protein>
    <recommendedName>
        <fullName evidence="2">Small ribosomal subunit protein uS12</fullName>
    </recommendedName>
    <alternativeName>
        <fullName evidence="4">30S ribosomal protein S12</fullName>
    </alternativeName>
</protein>
<organism>
    <name type="scientific">Cutibacterium acnes (strain DSM 16379 / KPA171202)</name>
    <name type="common">Propionibacterium acnes</name>
    <dbReference type="NCBI Taxonomy" id="267747"/>
    <lineage>
        <taxon>Bacteria</taxon>
        <taxon>Bacillati</taxon>
        <taxon>Actinomycetota</taxon>
        <taxon>Actinomycetes</taxon>
        <taxon>Propionibacteriales</taxon>
        <taxon>Propionibacteriaceae</taxon>
        <taxon>Cutibacterium</taxon>
    </lineage>
</organism>
<dbReference type="EMBL" id="AE017283">
    <property type="protein sequence ID" value="AAT83601.1"/>
    <property type="status" value="ALT_INIT"/>
    <property type="molecule type" value="Genomic_DNA"/>
</dbReference>
<dbReference type="RefSeq" id="WP_002514884.1">
    <property type="nucleotide sequence ID" value="NZ_CP025935.1"/>
</dbReference>
<dbReference type="PDB" id="8CRX">
    <property type="method" value="EM"/>
    <property type="resolution" value="2.78 A"/>
    <property type="chains" value="L=1-123"/>
</dbReference>
<dbReference type="PDB" id="8CWO">
    <property type="method" value="EM"/>
    <property type="resolution" value="2.84 A"/>
    <property type="chains" value="L=1-123"/>
</dbReference>
<dbReference type="PDBsum" id="8CRX"/>
<dbReference type="PDBsum" id="8CWO"/>
<dbReference type="SMR" id="Q6A6L2"/>
<dbReference type="EnsemblBacteria" id="AAT83601">
    <property type="protein sequence ID" value="AAT83601"/>
    <property type="gene ID" value="PPA1878"/>
</dbReference>
<dbReference type="GeneID" id="92857823"/>
<dbReference type="KEGG" id="pac:PPA1878"/>
<dbReference type="eggNOG" id="COG0048">
    <property type="taxonomic scope" value="Bacteria"/>
</dbReference>
<dbReference type="HOGENOM" id="CLU_104295_1_2_11"/>
<dbReference type="Proteomes" id="UP000000603">
    <property type="component" value="Chromosome"/>
</dbReference>
<dbReference type="GO" id="GO:0015935">
    <property type="term" value="C:small ribosomal subunit"/>
    <property type="evidence" value="ECO:0007669"/>
    <property type="project" value="InterPro"/>
</dbReference>
<dbReference type="GO" id="GO:0019843">
    <property type="term" value="F:rRNA binding"/>
    <property type="evidence" value="ECO:0007669"/>
    <property type="project" value="UniProtKB-UniRule"/>
</dbReference>
<dbReference type="GO" id="GO:0003735">
    <property type="term" value="F:structural constituent of ribosome"/>
    <property type="evidence" value="ECO:0007669"/>
    <property type="project" value="InterPro"/>
</dbReference>
<dbReference type="GO" id="GO:0000049">
    <property type="term" value="F:tRNA binding"/>
    <property type="evidence" value="ECO:0007669"/>
    <property type="project" value="UniProtKB-UniRule"/>
</dbReference>
<dbReference type="GO" id="GO:0006412">
    <property type="term" value="P:translation"/>
    <property type="evidence" value="ECO:0007669"/>
    <property type="project" value="UniProtKB-UniRule"/>
</dbReference>
<dbReference type="CDD" id="cd03368">
    <property type="entry name" value="Ribosomal_S12"/>
    <property type="match status" value="1"/>
</dbReference>
<dbReference type="FunFam" id="2.40.50.140:FF:000001">
    <property type="entry name" value="30S ribosomal protein S12"/>
    <property type="match status" value="1"/>
</dbReference>
<dbReference type="Gene3D" id="2.40.50.140">
    <property type="entry name" value="Nucleic acid-binding proteins"/>
    <property type="match status" value="1"/>
</dbReference>
<dbReference type="HAMAP" id="MF_00403_B">
    <property type="entry name" value="Ribosomal_uS12_B"/>
    <property type="match status" value="1"/>
</dbReference>
<dbReference type="InterPro" id="IPR012340">
    <property type="entry name" value="NA-bd_OB-fold"/>
</dbReference>
<dbReference type="InterPro" id="IPR006032">
    <property type="entry name" value="Ribosomal_uS12"/>
</dbReference>
<dbReference type="InterPro" id="IPR005679">
    <property type="entry name" value="Ribosomal_uS12_bac"/>
</dbReference>
<dbReference type="NCBIfam" id="TIGR00981">
    <property type="entry name" value="rpsL_bact"/>
    <property type="match status" value="1"/>
</dbReference>
<dbReference type="PANTHER" id="PTHR11652">
    <property type="entry name" value="30S RIBOSOMAL PROTEIN S12 FAMILY MEMBER"/>
    <property type="match status" value="1"/>
</dbReference>
<dbReference type="Pfam" id="PF00164">
    <property type="entry name" value="Ribosom_S12_S23"/>
    <property type="match status" value="1"/>
</dbReference>
<dbReference type="PIRSF" id="PIRSF002133">
    <property type="entry name" value="Ribosomal_S12/S23"/>
    <property type="match status" value="1"/>
</dbReference>
<dbReference type="PRINTS" id="PR01034">
    <property type="entry name" value="RIBOSOMALS12"/>
</dbReference>
<dbReference type="SUPFAM" id="SSF50249">
    <property type="entry name" value="Nucleic acid-binding proteins"/>
    <property type="match status" value="1"/>
</dbReference>
<dbReference type="PROSITE" id="PS00055">
    <property type="entry name" value="RIBOSOMAL_S12"/>
    <property type="match status" value="1"/>
</dbReference>
<gene>
    <name evidence="2" type="primary">rpsL</name>
    <name type="ordered locus">PPA1878</name>
</gene>
<proteinExistence type="evidence at protein level"/>
<feature type="chain" id="PRO_0000146286" description="Small ribosomal subunit protein uS12">
    <location>
        <begin position="1"/>
        <end position="123"/>
    </location>
</feature>
<feature type="region of interest" description="Disordered" evidence="3">
    <location>
        <begin position="1"/>
        <end position="32"/>
    </location>
</feature>
<feature type="region of interest" description="Disordered" evidence="3">
    <location>
        <begin position="103"/>
        <end position="123"/>
    </location>
</feature>
<feature type="compositionally biased region" description="Basic residues" evidence="3">
    <location>
        <begin position="108"/>
        <end position="123"/>
    </location>
</feature>
<feature type="modified residue" description="3-methylthioaspartic acid" evidence="1">
    <location>
        <position position="89"/>
    </location>
</feature>
<feature type="helix" evidence="5">
    <location>
        <begin position="4"/>
        <end position="9"/>
    </location>
</feature>
<feature type="helix" evidence="5">
    <location>
        <begin position="22"/>
        <end position="24"/>
    </location>
</feature>
<feature type="strand" evidence="5">
    <location>
        <begin position="28"/>
        <end position="40"/>
    </location>
</feature>
<feature type="strand" evidence="5">
    <location>
        <begin position="50"/>
        <end position="57"/>
    </location>
</feature>
<feature type="strand" evidence="5">
    <location>
        <begin position="62"/>
        <end position="66"/>
    </location>
</feature>
<feature type="strand" evidence="5">
    <location>
        <begin position="79"/>
        <end position="84"/>
    </location>
</feature>
<feature type="strand" evidence="5">
    <location>
        <begin position="95"/>
        <end position="97"/>
    </location>
</feature>
<feature type="helix" evidence="5">
    <location>
        <begin position="115"/>
        <end position="117"/>
    </location>
</feature>
<name>RS12_CUTAK</name>
<comment type="function">
    <text evidence="2">With S4 and S5 plays an important role in translational accuracy.</text>
</comment>
<comment type="function">
    <text evidence="2">Interacts with and stabilizes bases of the 16S rRNA that are involved in tRNA selection in the A site and with the mRNA backbone. Located at the interface of the 30S and 50S subunits, it traverses the body of the 30S subunit contacting proteins on the other side and probably holding the rRNA structure together. The combined cluster of proteins S8, S12 and S17 appears to hold together the shoulder and platform of the 30S subunit.</text>
</comment>
<comment type="subunit">
    <text evidence="2">Part of the 30S ribosomal subunit. Contacts proteins S8 and S17. May interact with IF1 in the 30S initiation complex.</text>
</comment>
<comment type="similarity">
    <text evidence="2">Belongs to the universal ribosomal protein uS12 family.</text>
</comment>
<comment type="sequence caution" evidence="4">
    <conflict type="erroneous initiation">
        <sequence resource="EMBL-CDS" id="AAT83601"/>
    </conflict>
</comment>
<accession>Q6A6L2</accession>
<sequence>MPTIQQLVRKGRTDKISKNKTPALKGSPQRRGVCTRVYTTTPKKPNSALRKVARVRLSSGIEVTAYIPGVGHNLQEHSMVLVRGGRVKDLPGVRYKIVRGSLDTQGVKGRKQARSRYGAKKEK</sequence>
<reference key="1">
    <citation type="journal article" date="2004" name="Science">
        <title>The complete genome sequence of Propionibacterium acnes, a commensal of human skin.</title>
        <authorList>
            <person name="Brueggemann H."/>
            <person name="Henne A."/>
            <person name="Hoster F."/>
            <person name="Liesegang H."/>
            <person name="Wiezer A."/>
            <person name="Strittmatter A."/>
            <person name="Hujer S."/>
            <person name="Duerre P."/>
            <person name="Gottschalk G."/>
        </authorList>
    </citation>
    <scope>NUCLEOTIDE SEQUENCE [LARGE SCALE GENOMIC DNA]</scope>
    <source>
        <strain>DSM 16379 / KPA171202</strain>
    </source>
</reference>
<keyword id="KW-0002">3D-structure</keyword>
<keyword id="KW-0488">Methylation</keyword>
<keyword id="KW-0687">Ribonucleoprotein</keyword>
<keyword id="KW-0689">Ribosomal protein</keyword>
<keyword id="KW-0694">RNA-binding</keyword>
<keyword id="KW-0699">rRNA-binding</keyword>
<keyword id="KW-0820">tRNA-binding</keyword>
<evidence type="ECO:0000250" key="1"/>
<evidence type="ECO:0000255" key="2">
    <source>
        <dbReference type="HAMAP-Rule" id="MF_00403"/>
    </source>
</evidence>
<evidence type="ECO:0000256" key="3">
    <source>
        <dbReference type="SAM" id="MobiDB-lite"/>
    </source>
</evidence>
<evidence type="ECO:0000305" key="4"/>
<evidence type="ECO:0007829" key="5">
    <source>
        <dbReference type="PDB" id="8CWO"/>
    </source>
</evidence>